<feature type="chain" id="PRO_0000427880" description="3'-5' exoribonuclease MT2234.1">
    <location>
        <begin position="1"/>
        <end position="168"/>
    </location>
</feature>
<feature type="region of interest" description="RNA binding" evidence="1">
    <location>
        <begin position="6"/>
        <end position="9"/>
    </location>
</feature>
<feature type="binding site" evidence="1">
    <location>
        <position position="6"/>
    </location>
    <ligand>
        <name>Mg(2+)</name>
        <dbReference type="ChEBI" id="CHEBI:18420"/>
        <note>catalytic</note>
    </ligand>
</feature>
<feature type="strand" evidence="2">
    <location>
        <begin position="2"/>
        <end position="11"/>
    </location>
</feature>
<feature type="strand" evidence="2">
    <location>
        <begin position="16"/>
        <end position="25"/>
    </location>
</feature>
<feature type="strand" evidence="2">
    <location>
        <begin position="30"/>
        <end position="38"/>
    </location>
</feature>
<feature type="helix" evidence="2">
    <location>
        <begin position="40"/>
        <end position="42"/>
    </location>
</feature>
<feature type="helix" evidence="2">
    <location>
        <begin position="45"/>
        <end position="50"/>
    </location>
</feature>
<feature type="helix" evidence="2">
    <location>
        <begin position="52"/>
        <end position="54"/>
    </location>
</feature>
<feature type="helix" evidence="2">
    <location>
        <begin position="66"/>
        <end position="76"/>
    </location>
</feature>
<feature type="turn" evidence="2">
    <location>
        <begin position="77"/>
        <end position="80"/>
    </location>
</feature>
<feature type="strand" evidence="2">
    <location>
        <begin position="81"/>
        <end position="83"/>
    </location>
</feature>
<feature type="strand" evidence="2">
    <location>
        <begin position="86"/>
        <end position="91"/>
    </location>
</feature>
<feature type="helix" evidence="2">
    <location>
        <begin position="93"/>
        <end position="100"/>
    </location>
</feature>
<feature type="helix" evidence="2">
    <location>
        <begin position="101"/>
        <end position="103"/>
    </location>
</feature>
<feature type="helix" evidence="2">
    <location>
        <begin position="106"/>
        <end position="108"/>
    </location>
</feature>
<feature type="helix" evidence="2">
    <location>
        <begin position="120"/>
        <end position="126"/>
    </location>
</feature>
<feature type="turn" evidence="2">
    <location>
        <begin position="137"/>
        <end position="140"/>
    </location>
</feature>
<feature type="helix" evidence="2">
    <location>
        <begin position="142"/>
        <end position="156"/>
    </location>
</feature>
<feature type="turn" evidence="2">
    <location>
        <begin position="157"/>
        <end position="159"/>
    </location>
</feature>
<sequence>MRYFYDTEFIEDGHTIELISIGVVAEDGREYYAVSTEFDPERAGSWVRTHVLPKLPPPASQLWRSRQQIRLDLEEFLRIDGTDSIELWAWVGAYDHVALCQLWGPMTALPPTVPRFTRELRQLWEDRGCPRMPPRPRDVHDALVDARDQLRRFRLITSTDDAGRGAAR</sequence>
<accession>P9WJ72</accession>
<accession>F2GJZ2</accession>
<accession>I6Y8M5</accession>
<accession>L7N5T0</accession>
<accession>O53513</accession>
<accession>Q7D7E6</accession>
<dbReference type="EC" id="3.1.13.-" evidence="1"/>
<dbReference type="EMBL" id="AE000516">
    <property type="protein sequence ID" value="AAK46520.1"/>
    <property type="molecule type" value="Genomic_DNA"/>
</dbReference>
<dbReference type="PIR" id="E70936">
    <property type="entry name" value="E70936"/>
</dbReference>
<dbReference type="RefSeq" id="WP_003411331.1">
    <property type="nucleotide sequence ID" value="NZ_KK341227.1"/>
</dbReference>
<dbReference type="PDB" id="4OKE">
    <property type="method" value="X-ray"/>
    <property type="resolution" value="1.70 A"/>
    <property type="chains" value="A/B=2-168"/>
</dbReference>
<dbReference type="PDB" id="4OKJ">
    <property type="method" value="X-ray"/>
    <property type="resolution" value="2.10 A"/>
    <property type="chains" value="A/B=2-168"/>
</dbReference>
<dbReference type="PDB" id="4OKK">
    <property type="method" value="X-ray"/>
    <property type="resolution" value="2.21 A"/>
    <property type="chains" value="A/B=2-168"/>
</dbReference>
<dbReference type="PDBsum" id="4OKE"/>
<dbReference type="PDBsum" id="4OKJ"/>
<dbReference type="PDBsum" id="4OKK"/>
<dbReference type="SMR" id="P9WJ72"/>
<dbReference type="KEGG" id="mtc:MT2234.1"/>
<dbReference type="PATRIC" id="fig|83331.31.peg.2410"/>
<dbReference type="HOGENOM" id="CLU_114979_0_0_11"/>
<dbReference type="Proteomes" id="UP000001020">
    <property type="component" value="Chromosome"/>
</dbReference>
<dbReference type="GO" id="GO:0008408">
    <property type="term" value="F:3'-5' exonuclease activity"/>
    <property type="evidence" value="ECO:0007669"/>
    <property type="project" value="InterPro"/>
</dbReference>
<dbReference type="GO" id="GO:0000287">
    <property type="term" value="F:magnesium ion binding"/>
    <property type="evidence" value="ECO:0007669"/>
    <property type="project" value="UniProtKB-UniRule"/>
</dbReference>
<dbReference type="GO" id="GO:0003676">
    <property type="term" value="F:nucleic acid binding"/>
    <property type="evidence" value="ECO:0007669"/>
    <property type="project" value="InterPro"/>
</dbReference>
<dbReference type="GO" id="GO:0004532">
    <property type="term" value="F:RNA exonuclease activity"/>
    <property type="evidence" value="ECO:0007669"/>
    <property type="project" value="UniProtKB-UniRule"/>
</dbReference>
<dbReference type="Gene3D" id="3.30.420.10">
    <property type="entry name" value="Ribonuclease H-like superfamily/Ribonuclease H"/>
    <property type="match status" value="1"/>
</dbReference>
<dbReference type="HAMAP" id="MF_00977">
    <property type="entry name" value="3_5_Exoribonuc_actinobact"/>
    <property type="match status" value="1"/>
</dbReference>
<dbReference type="InterPro" id="IPR030853">
    <property type="entry name" value="3_5_Exoribonuc_actinobac"/>
</dbReference>
<dbReference type="InterPro" id="IPR012337">
    <property type="entry name" value="RNaseH-like_sf"/>
</dbReference>
<dbReference type="InterPro" id="IPR036397">
    <property type="entry name" value="RNaseH_sf"/>
</dbReference>
<dbReference type="InterPro" id="IPR033390">
    <property type="entry name" value="Rv2179c-like"/>
</dbReference>
<dbReference type="NCBIfam" id="NF033638">
    <property type="entry name" value="RNase_AS"/>
    <property type="match status" value="1"/>
</dbReference>
<dbReference type="Pfam" id="PF16473">
    <property type="entry name" value="Rv2179c-like"/>
    <property type="match status" value="1"/>
</dbReference>
<dbReference type="SUPFAM" id="SSF53098">
    <property type="entry name" value="Ribonuclease H-like"/>
    <property type="match status" value="1"/>
</dbReference>
<reference key="1">
    <citation type="journal article" date="2002" name="J. Bacteriol.">
        <title>Whole-genome comparison of Mycobacterium tuberculosis clinical and laboratory strains.</title>
        <authorList>
            <person name="Fleischmann R.D."/>
            <person name="Alland D."/>
            <person name="Eisen J.A."/>
            <person name="Carpenter L."/>
            <person name="White O."/>
            <person name="Peterson J.D."/>
            <person name="DeBoy R.T."/>
            <person name="Dodson R.J."/>
            <person name="Gwinn M.L."/>
            <person name="Haft D.H."/>
            <person name="Hickey E.K."/>
            <person name="Kolonay J.F."/>
            <person name="Nelson W.C."/>
            <person name="Umayam L.A."/>
            <person name="Ermolaeva M.D."/>
            <person name="Salzberg S.L."/>
            <person name="Delcher A."/>
            <person name="Utterback T.R."/>
            <person name="Weidman J.F."/>
            <person name="Khouri H.M."/>
            <person name="Gill J."/>
            <person name="Mikula A."/>
            <person name="Bishai W."/>
            <person name="Jacobs W.R. Jr."/>
            <person name="Venter J.C."/>
            <person name="Fraser C.M."/>
        </authorList>
    </citation>
    <scope>NUCLEOTIDE SEQUENCE [LARGE SCALE GENOMIC DNA]</scope>
    <source>
        <strain>CDC 1551 / Oshkosh</strain>
    </source>
</reference>
<organism>
    <name type="scientific">Mycobacterium tuberculosis (strain CDC 1551 / Oshkosh)</name>
    <dbReference type="NCBI Taxonomy" id="83331"/>
    <lineage>
        <taxon>Bacteria</taxon>
        <taxon>Bacillati</taxon>
        <taxon>Actinomycetota</taxon>
        <taxon>Actinomycetes</taxon>
        <taxon>Mycobacteriales</taxon>
        <taxon>Mycobacteriaceae</taxon>
        <taxon>Mycobacterium</taxon>
        <taxon>Mycobacterium tuberculosis complex</taxon>
    </lineage>
</organism>
<protein>
    <recommendedName>
        <fullName evidence="1">3'-5' exoribonuclease MT2234.1</fullName>
        <ecNumber evidence="1">3.1.13.-</ecNumber>
    </recommendedName>
</protein>
<proteinExistence type="evidence at protein level"/>
<evidence type="ECO:0000255" key="1">
    <source>
        <dbReference type="HAMAP-Rule" id="MF_00977"/>
    </source>
</evidence>
<evidence type="ECO:0007829" key="2">
    <source>
        <dbReference type="PDB" id="4OKE"/>
    </source>
</evidence>
<keyword id="KW-0002">3D-structure</keyword>
<keyword id="KW-0269">Exonuclease</keyword>
<keyword id="KW-0378">Hydrolase</keyword>
<keyword id="KW-0460">Magnesium</keyword>
<keyword id="KW-0479">Metal-binding</keyword>
<keyword id="KW-0540">Nuclease</keyword>
<keyword id="KW-1185">Reference proteome</keyword>
<gene>
    <name type="ordered locus">MT2234.1</name>
</gene>
<name>EXRBN_MYCTO</name>
<comment type="function">
    <text evidence="1">Exonuclease that cleaves single-stranded 3' overhangs of double-stranded RNA.</text>
</comment>
<comment type="cofactor">
    <cofactor evidence="1">
        <name>Mg(2+)</name>
        <dbReference type="ChEBI" id="CHEBI:18420"/>
    </cofactor>
    <text evidence="1">Binds 1 Mg(2+) ion per subunit.</text>
</comment>
<comment type="subunit">
    <text evidence="1">Homodimer.</text>
</comment>